<evidence type="ECO:0000255" key="1">
    <source>
        <dbReference type="HAMAP-Rule" id="MF_01011"/>
    </source>
</evidence>
<keyword id="KW-0489">Methyltransferase</keyword>
<keyword id="KW-0949">S-adenosyl-L-methionine</keyword>
<keyword id="KW-0808">Transferase</keyword>
<keyword id="KW-0819">tRNA processing</keyword>
<proteinExistence type="inferred from homology"/>
<gene>
    <name evidence="1" type="primary">trmA</name>
    <name type="ordered locus">Sbal223_4076</name>
</gene>
<sequence length="365" mass="42013">MNLAAMDPQTYDTQLEHKRIKLEQAFAQFETPSVEVFASEPANYRMRAEFRMWHDGDDLYYYMFDKVLNEKVRCDQYLPASVLINQMMSALIAELKPNPSLRHKLFQVDFLSTLSGEILVSLLYHRQLDDQWRADATALKAKLSSQFNVNIIGRARKQKIDLDKDFVVESLQVNDKTFLYKQIENSFTQPNAKVSVKMLEWAIDATQNSQGDLLELYCGNGNFSIALAQNFNRVLATELAKPSVDAAQYNIEVNGIENLQIIRMSAEDFSDAMAKKRSFRRLEGIDLDSYVCNTIFVDPPRAGIDPDTLALVQGYERILYISCNPETLKDNLQQLNETHKVTRFALFDQFPYTDHMETGVLLERR</sequence>
<comment type="function">
    <text evidence="1">Dual-specificity methyltransferase that catalyzes the formation of 5-methyluridine at position 54 (m5U54) in all tRNAs, and that of position 341 (m5U341) in tmRNA (transfer-mRNA).</text>
</comment>
<comment type="catalytic activity">
    <reaction evidence="1">
        <text>uridine(54) in tRNA + S-adenosyl-L-methionine = 5-methyluridine(54) in tRNA + S-adenosyl-L-homocysteine + H(+)</text>
        <dbReference type="Rhea" id="RHEA:42712"/>
        <dbReference type="Rhea" id="RHEA-COMP:10167"/>
        <dbReference type="Rhea" id="RHEA-COMP:10193"/>
        <dbReference type="ChEBI" id="CHEBI:15378"/>
        <dbReference type="ChEBI" id="CHEBI:57856"/>
        <dbReference type="ChEBI" id="CHEBI:59789"/>
        <dbReference type="ChEBI" id="CHEBI:65315"/>
        <dbReference type="ChEBI" id="CHEBI:74447"/>
        <dbReference type="EC" id="2.1.1.35"/>
    </reaction>
</comment>
<comment type="catalytic activity">
    <reaction evidence="1">
        <text>uridine(341) in tmRNA + S-adenosyl-L-methionine = 5-methyluridine(341) in tmRNA + S-adenosyl-L-homocysteine + H(+)</text>
        <dbReference type="Rhea" id="RHEA:43612"/>
        <dbReference type="Rhea" id="RHEA-COMP:10630"/>
        <dbReference type="Rhea" id="RHEA-COMP:10631"/>
        <dbReference type="ChEBI" id="CHEBI:15378"/>
        <dbReference type="ChEBI" id="CHEBI:57856"/>
        <dbReference type="ChEBI" id="CHEBI:59789"/>
        <dbReference type="ChEBI" id="CHEBI:65315"/>
        <dbReference type="ChEBI" id="CHEBI:74447"/>
    </reaction>
</comment>
<comment type="similarity">
    <text evidence="1">Belongs to the class I-like SAM-binding methyltransferase superfamily. RNA M5U methyltransferase family. TrmA subfamily.</text>
</comment>
<feature type="chain" id="PRO_1000148890" description="tRNA/tmRNA (uracil-C(5))-methyltransferase">
    <location>
        <begin position="1"/>
        <end position="365"/>
    </location>
</feature>
<feature type="active site" description="Nucleophile" evidence="1">
    <location>
        <position position="323"/>
    </location>
</feature>
<feature type="active site" description="Proton acceptor" evidence="1">
    <location>
        <position position="357"/>
    </location>
</feature>
<feature type="binding site" evidence="1">
    <location>
        <position position="189"/>
    </location>
    <ligand>
        <name>S-adenosyl-L-methionine</name>
        <dbReference type="ChEBI" id="CHEBI:59789"/>
    </ligand>
</feature>
<feature type="binding site" evidence="1">
    <location>
        <position position="217"/>
    </location>
    <ligand>
        <name>S-adenosyl-L-methionine</name>
        <dbReference type="ChEBI" id="CHEBI:59789"/>
    </ligand>
</feature>
<feature type="binding site" evidence="1">
    <location>
        <position position="222"/>
    </location>
    <ligand>
        <name>S-adenosyl-L-methionine</name>
        <dbReference type="ChEBI" id="CHEBI:59789"/>
    </ligand>
</feature>
<feature type="binding site" evidence="1">
    <location>
        <position position="238"/>
    </location>
    <ligand>
        <name>S-adenosyl-L-methionine</name>
        <dbReference type="ChEBI" id="CHEBI:59789"/>
    </ligand>
</feature>
<feature type="binding site" evidence="1">
    <location>
        <position position="298"/>
    </location>
    <ligand>
        <name>S-adenosyl-L-methionine</name>
        <dbReference type="ChEBI" id="CHEBI:59789"/>
    </ligand>
</feature>
<accession>B8EBM5</accession>
<protein>
    <recommendedName>
        <fullName evidence="1">tRNA/tmRNA (uracil-C(5))-methyltransferase</fullName>
        <ecNumber evidence="1">2.1.1.-</ecNumber>
        <ecNumber evidence="1">2.1.1.35</ecNumber>
    </recommendedName>
    <alternativeName>
        <fullName evidence="1">tRNA (uracil(54)-C(5))-methyltransferase</fullName>
    </alternativeName>
    <alternativeName>
        <fullName evidence="1">tRNA(m5U54)-methyltransferase</fullName>
        <shortName evidence="1">RUMT</shortName>
    </alternativeName>
    <alternativeName>
        <fullName evidence="1">tmRNA (uracil(341)-C(5))-methyltransferase</fullName>
    </alternativeName>
</protein>
<reference key="1">
    <citation type="submission" date="2008-12" db="EMBL/GenBank/DDBJ databases">
        <title>Complete sequence of chromosome of Shewanella baltica OS223.</title>
        <authorList>
            <consortium name="US DOE Joint Genome Institute"/>
            <person name="Lucas S."/>
            <person name="Copeland A."/>
            <person name="Lapidus A."/>
            <person name="Glavina del Rio T."/>
            <person name="Dalin E."/>
            <person name="Tice H."/>
            <person name="Bruce D."/>
            <person name="Goodwin L."/>
            <person name="Pitluck S."/>
            <person name="Chertkov O."/>
            <person name="Meincke L."/>
            <person name="Brettin T."/>
            <person name="Detter J.C."/>
            <person name="Han C."/>
            <person name="Kuske C.R."/>
            <person name="Larimer F."/>
            <person name="Land M."/>
            <person name="Hauser L."/>
            <person name="Kyrpides N."/>
            <person name="Ovchinnikova G."/>
            <person name="Brettar I."/>
            <person name="Rodrigues J."/>
            <person name="Konstantinidis K."/>
            <person name="Tiedje J."/>
        </authorList>
    </citation>
    <scope>NUCLEOTIDE SEQUENCE [LARGE SCALE GENOMIC DNA]</scope>
    <source>
        <strain>OS223</strain>
    </source>
</reference>
<dbReference type="EC" id="2.1.1.-" evidence="1"/>
<dbReference type="EC" id="2.1.1.35" evidence="1"/>
<dbReference type="EMBL" id="CP001252">
    <property type="protein sequence ID" value="ACK48549.1"/>
    <property type="molecule type" value="Genomic_DNA"/>
</dbReference>
<dbReference type="RefSeq" id="WP_011848155.1">
    <property type="nucleotide sequence ID" value="NC_011663.1"/>
</dbReference>
<dbReference type="SMR" id="B8EBM5"/>
<dbReference type="GeneID" id="11770534"/>
<dbReference type="KEGG" id="sbp:Sbal223_4076"/>
<dbReference type="HOGENOM" id="CLU_043022_0_0_6"/>
<dbReference type="Proteomes" id="UP000002507">
    <property type="component" value="Chromosome"/>
</dbReference>
<dbReference type="GO" id="GO:0005829">
    <property type="term" value="C:cytosol"/>
    <property type="evidence" value="ECO:0007669"/>
    <property type="project" value="TreeGrafter"/>
</dbReference>
<dbReference type="GO" id="GO:0019843">
    <property type="term" value="F:rRNA binding"/>
    <property type="evidence" value="ECO:0007669"/>
    <property type="project" value="TreeGrafter"/>
</dbReference>
<dbReference type="GO" id="GO:0030697">
    <property type="term" value="F:tRNA (uracil(54)-C5)-methyltransferase activity, S-adenosyl methionine-dependent"/>
    <property type="evidence" value="ECO:0007669"/>
    <property type="project" value="UniProtKB-UniRule"/>
</dbReference>
<dbReference type="GO" id="GO:0000049">
    <property type="term" value="F:tRNA binding"/>
    <property type="evidence" value="ECO:0007669"/>
    <property type="project" value="TreeGrafter"/>
</dbReference>
<dbReference type="GO" id="GO:0030488">
    <property type="term" value="P:tRNA methylation"/>
    <property type="evidence" value="ECO:0007669"/>
    <property type="project" value="UniProtKB-UniRule"/>
</dbReference>
<dbReference type="CDD" id="cd02440">
    <property type="entry name" value="AdoMet_MTases"/>
    <property type="match status" value="1"/>
</dbReference>
<dbReference type="FunFam" id="2.40.50.1070:FF:000001">
    <property type="entry name" value="tRNA/tmRNA (uracil-C(5))-methyltransferase"/>
    <property type="match status" value="1"/>
</dbReference>
<dbReference type="FunFam" id="3.40.50.150:FF:000012">
    <property type="entry name" value="tRNA/tmRNA (uracil-C(5))-methyltransferase"/>
    <property type="match status" value="1"/>
</dbReference>
<dbReference type="Gene3D" id="2.40.50.1070">
    <property type="match status" value="1"/>
</dbReference>
<dbReference type="Gene3D" id="3.40.50.150">
    <property type="entry name" value="Vaccinia Virus protein VP39"/>
    <property type="match status" value="1"/>
</dbReference>
<dbReference type="HAMAP" id="MF_01011">
    <property type="entry name" value="RNA_methyltr_TrmA"/>
    <property type="match status" value="1"/>
</dbReference>
<dbReference type="InterPro" id="IPR030390">
    <property type="entry name" value="MeTrfase_TrmA_AS"/>
</dbReference>
<dbReference type="InterPro" id="IPR030391">
    <property type="entry name" value="MeTrfase_TrmA_CS"/>
</dbReference>
<dbReference type="InterPro" id="IPR029063">
    <property type="entry name" value="SAM-dependent_MTases_sf"/>
</dbReference>
<dbReference type="InterPro" id="IPR011869">
    <property type="entry name" value="TrmA_MeTrfase"/>
</dbReference>
<dbReference type="InterPro" id="IPR010280">
    <property type="entry name" value="U5_MeTrfase_fam"/>
</dbReference>
<dbReference type="NCBIfam" id="TIGR02143">
    <property type="entry name" value="trmA_only"/>
    <property type="match status" value="1"/>
</dbReference>
<dbReference type="PANTHER" id="PTHR47790">
    <property type="entry name" value="TRNA/TMRNA (URACIL-C(5))-METHYLTRANSFERASE"/>
    <property type="match status" value="1"/>
</dbReference>
<dbReference type="PANTHER" id="PTHR47790:SF2">
    <property type="entry name" value="TRNA_TMRNA (URACIL-C(5))-METHYLTRANSFERASE"/>
    <property type="match status" value="1"/>
</dbReference>
<dbReference type="Pfam" id="PF05958">
    <property type="entry name" value="tRNA_U5-meth_tr"/>
    <property type="match status" value="1"/>
</dbReference>
<dbReference type="SUPFAM" id="SSF53335">
    <property type="entry name" value="S-adenosyl-L-methionine-dependent methyltransferases"/>
    <property type="match status" value="1"/>
</dbReference>
<dbReference type="PROSITE" id="PS51687">
    <property type="entry name" value="SAM_MT_RNA_M5U"/>
    <property type="match status" value="1"/>
</dbReference>
<dbReference type="PROSITE" id="PS01230">
    <property type="entry name" value="TRMA_1"/>
    <property type="match status" value="1"/>
</dbReference>
<dbReference type="PROSITE" id="PS01231">
    <property type="entry name" value="TRMA_2"/>
    <property type="match status" value="1"/>
</dbReference>
<name>TRMA_SHEB2</name>
<organism>
    <name type="scientific">Shewanella baltica (strain OS223)</name>
    <dbReference type="NCBI Taxonomy" id="407976"/>
    <lineage>
        <taxon>Bacteria</taxon>
        <taxon>Pseudomonadati</taxon>
        <taxon>Pseudomonadota</taxon>
        <taxon>Gammaproteobacteria</taxon>
        <taxon>Alteromonadales</taxon>
        <taxon>Shewanellaceae</taxon>
        <taxon>Shewanella</taxon>
    </lineage>
</organism>